<evidence type="ECO:0000250" key="1"/>
<evidence type="ECO:0000255" key="2">
    <source>
        <dbReference type="PROSITE-ProRule" id="PRU00159"/>
    </source>
</evidence>
<evidence type="ECO:0000255" key="3">
    <source>
        <dbReference type="PROSITE-ProRule" id="PRU10027"/>
    </source>
</evidence>
<evidence type="ECO:0000305" key="4"/>
<sequence>MEQYEKVEKIGEGTYGVVYKARDRVTDETIALKKIRLEQEDEGVPSTAIREISLLKEMQHRNIVRLQDVVHSEKRLYLVFEYLDLDLKKHMDSSPEFVKDPRQVKMFLYQILCGIAYCHSHRVLHRDLKPQNLLIDRRTNSLKLADFGLARAFGIPVRTFTHEVVTLWYRAPEILLGSRHYSTPVDVWSVGCLFAEMVNRRPLFPGDSEIDELFKIFRILGTPNEETWPGVTALPDFKSTFPKWPPKDLATMVPNLDAAGLNLLSSMLSLDPSKRITARIAVEHEYFKDIKFVP</sequence>
<dbReference type="EC" id="2.7.11.22"/>
<dbReference type="EC" id="2.7.11.23"/>
<dbReference type="EMBL" id="X89400">
    <property type="protein sequence ID" value="CAA61581.1"/>
    <property type="molecule type" value="mRNA"/>
</dbReference>
<dbReference type="PIR" id="S57928">
    <property type="entry name" value="S57928"/>
</dbReference>
<dbReference type="SMR" id="P52389"/>
<dbReference type="GO" id="GO:0000307">
    <property type="term" value="C:cyclin-dependent protein kinase holoenzyme complex"/>
    <property type="evidence" value="ECO:0007669"/>
    <property type="project" value="TreeGrafter"/>
</dbReference>
<dbReference type="GO" id="GO:0005737">
    <property type="term" value="C:cytoplasm"/>
    <property type="evidence" value="ECO:0007669"/>
    <property type="project" value="TreeGrafter"/>
</dbReference>
<dbReference type="GO" id="GO:0005634">
    <property type="term" value="C:nucleus"/>
    <property type="evidence" value="ECO:0007669"/>
    <property type="project" value="TreeGrafter"/>
</dbReference>
<dbReference type="GO" id="GO:0005524">
    <property type="term" value="F:ATP binding"/>
    <property type="evidence" value="ECO:0007669"/>
    <property type="project" value="UniProtKB-KW"/>
</dbReference>
<dbReference type="GO" id="GO:0030332">
    <property type="term" value="F:cyclin binding"/>
    <property type="evidence" value="ECO:0007669"/>
    <property type="project" value="TreeGrafter"/>
</dbReference>
<dbReference type="GO" id="GO:0004693">
    <property type="term" value="F:cyclin-dependent protein serine/threonine kinase activity"/>
    <property type="evidence" value="ECO:0007669"/>
    <property type="project" value="UniProtKB-EC"/>
</dbReference>
<dbReference type="GO" id="GO:0106310">
    <property type="term" value="F:protein serine kinase activity"/>
    <property type="evidence" value="ECO:0007669"/>
    <property type="project" value="RHEA"/>
</dbReference>
<dbReference type="GO" id="GO:0008353">
    <property type="term" value="F:RNA polymerase II CTD heptapeptide repeat kinase activity"/>
    <property type="evidence" value="ECO:0007669"/>
    <property type="project" value="UniProtKB-EC"/>
</dbReference>
<dbReference type="GO" id="GO:0051301">
    <property type="term" value="P:cell division"/>
    <property type="evidence" value="ECO:0007669"/>
    <property type="project" value="UniProtKB-KW"/>
</dbReference>
<dbReference type="GO" id="GO:0000082">
    <property type="term" value="P:G1/S transition of mitotic cell cycle"/>
    <property type="evidence" value="ECO:0007669"/>
    <property type="project" value="TreeGrafter"/>
</dbReference>
<dbReference type="GO" id="GO:0010389">
    <property type="term" value="P:regulation of G2/M transition of mitotic cell cycle"/>
    <property type="evidence" value="ECO:0007669"/>
    <property type="project" value="TreeGrafter"/>
</dbReference>
<dbReference type="GO" id="GO:0051445">
    <property type="term" value="P:regulation of meiotic cell cycle"/>
    <property type="evidence" value="ECO:0007669"/>
    <property type="project" value="TreeGrafter"/>
</dbReference>
<dbReference type="GO" id="GO:0007165">
    <property type="term" value="P:signal transduction"/>
    <property type="evidence" value="ECO:0007669"/>
    <property type="project" value="TreeGrafter"/>
</dbReference>
<dbReference type="CDD" id="cd07835">
    <property type="entry name" value="STKc_CDK1_CdkB_like"/>
    <property type="match status" value="1"/>
</dbReference>
<dbReference type="FunFam" id="3.30.200.20:FF:000187">
    <property type="entry name" value="Cell division control protein 2"/>
    <property type="match status" value="1"/>
</dbReference>
<dbReference type="FunFam" id="1.10.510.10:FF:000280">
    <property type="entry name" value="Cell division control protein 2 homolog"/>
    <property type="match status" value="1"/>
</dbReference>
<dbReference type="Gene3D" id="3.30.200.20">
    <property type="entry name" value="Phosphorylase Kinase, domain 1"/>
    <property type="match status" value="1"/>
</dbReference>
<dbReference type="Gene3D" id="1.10.510.10">
    <property type="entry name" value="Transferase(Phosphotransferase) domain 1"/>
    <property type="match status" value="1"/>
</dbReference>
<dbReference type="InterPro" id="IPR050108">
    <property type="entry name" value="CDK"/>
</dbReference>
<dbReference type="InterPro" id="IPR011009">
    <property type="entry name" value="Kinase-like_dom_sf"/>
</dbReference>
<dbReference type="InterPro" id="IPR000719">
    <property type="entry name" value="Prot_kinase_dom"/>
</dbReference>
<dbReference type="InterPro" id="IPR017441">
    <property type="entry name" value="Protein_kinase_ATP_BS"/>
</dbReference>
<dbReference type="InterPro" id="IPR008271">
    <property type="entry name" value="Ser/Thr_kinase_AS"/>
</dbReference>
<dbReference type="PANTHER" id="PTHR24056">
    <property type="entry name" value="CELL DIVISION PROTEIN KINASE"/>
    <property type="match status" value="1"/>
</dbReference>
<dbReference type="PANTHER" id="PTHR24056:SF548">
    <property type="entry name" value="CYCLIN-DEPENDENT KINASE A-1"/>
    <property type="match status" value="1"/>
</dbReference>
<dbReference type="Pfam" id="PF00069">
    <property type="entry name" value="Pkinase"/>
    <property type="match status" value="1"/>
</dbReference>
<dbReference type="SMART" id="SM00220">
    <property type="entry name" value="S_TKc"/>
    <property type="match status" value="1"/>
</dbReference>
<dbReference type="SUPFAM" id="SSF56112">
    <property type="entry name" value="Protein kinase-like (PK-like)"/>
    <property type="match status" value="1"/>
</dbReference>
<dbReference type="PROSITE" id="PS00107">
    <property type="entry name" value="PROTEIN_KINASE_ATP"/>
    <property type="match status" value="1"/>
</dbReference>
<dbReference type="PROSITE" id="PS50011">
    <property type="entry name" value="PROTEIN_KINASE_DOM"/>
    <property type="match status" value="1"/>
</dbReference>
<dbReference type="PROSITE" id="PS00108">
    <property type="entry name" value="PROTEIN_KINASE_ST"/>
    <property type="match status" value="1"/>
</dbReference>
<name>CDC2_VIGUN</name>
<proteinExistence type="evidence at transcript level"/>
<comment type="function">
    <text>Plays a key role in the control of the eukaryotic cell cycle. Component of the kinase complex that phosphorylates the repetitive C-terminus of RNA polymerase II.</text>
</comment>
<comment type="catalytic activity">
    <reaction>
        <text>L-seryl-[protein] + ATP = O-phospho-L-seryl-[protein] + ADP + H(+)</text>
        <dbReference type="Rhea" id="RHEA:17989"/>
        <dbReference type="Rhea" id="RHEA-COMP:9863"/>
        <dbReference type="Rhea" id="RHEA-COMP:11604"/>
        <dbReference type="ChEBI" id="CHEBI:15378"/>
        <dbReference type="ChEBI" id="CHEBI:29999"/>
        <dbReference type="ChEBI" id="CHEBI:30616"/>
        <dbReference type="ChEBI" id="CHEBI:83421"/>
        <dbReference type="ChEBI" id="CHEBI:456216"/>
        <dbReference type="EC" id="2.7.11.22"/>
    </reaction>
</comment>
<comment type="catalytic activity">
    <reaction>
        <text>L-threonyl-[protein] + ATP = O-phospho-L-threonyl-[protein] + ADP + H(+)</text>
        <dbReference type="Rhea" id="RHEA:46608"/>
        <dbReference type="Rhea" id="RHEA-COMP:11060"/>
        <dbReference type="Rhea" id="RHEA-COMP:11605"/>
        <dbReference type="ChEBI" id="CHEBI:15378"/>
        <dbReference type="ChEBI" id="CHEBI:30013"/>
        <dbReference type="ChEBI" id="CHEBI:30616"/>
        <dbReference type="ChEBI" id="CHEBI:61977"/>
        <dbReference type="ChEBI" id="CHEBI:456216"/>
        <dbReference type="EC" id="2.7.11.22"/>
    </reaction>
</comment>
<comment type="catalytic activity">
    <reaction>
        <text>[DNA-directed RNA polymerase] + ATP = phospho-[DNA-directed RNA polymerase] + ADP + H(+)</text>
        <dbReference type="Rhea" id="RHEA:10216"/>
        <dbReference type="Rhea" id="RHEA-COMP:11321"/>
        <dbReference type="Rhea" id="RHEA-COMP:11322"/>
        <dbReference type="ChEBI" id="CHEBI:15378"/>
        <dbReference type="ChEBI" id="CHEBI:30616"/>
        <dbReference type="ChEBI" id="CHEBI:43176"/>
        <dbReference type="ChEBI" id="CHEBI:68546"/>
        <dbReference type="ChEBI" id="CHEBI:456216"/>
        <dbReference type="EC" id="2.7.11.23"/>
    </reaction>
</comment>
<comment type="activity regulation">
    <text evidence="1">Phosphorylation at Thr-14 or Tyr-15 inactivates the enzyme, while phosphorylation at Thr-161 activates it.</text>
</comment>
<comment type="similarity">
    <text evidence="4">Belongs to the protein kinase superfamily. CMGC Ser/Thr protein kinase family. CDC2/CDKX subfamily.</text>
</comment>
<feature type="chain" id="PRO_0000085761" description="Cell division control protein 2 homolog">
    <location>
        <begin position="1"/>
        <end position="294"/>
    </location>
</feature>
<feature type="domain" description="Protein kinase" evidence="2">
    <location>
        <begin position="4"/>
        <end position="287"/>
    </location>
</feature>
<feature type="active site" description="Proton acceptor" evidence="2 3">
    <location>
        <position position="127"/>
    </location>
</feature>
<feature type="binding site" evidence="2">
    <location>
        <begin position="10"/>
        <end position="18"/>
    </location>
    <ligand>
        <name>ATP</name>
        <dbReference type="ChEBI" id="CHEBI:30616"/>
    </ligand>
</feature>
<feature type="binding site" evidence="2">
    <location>
        <position position="33"/>
    </location>
    <ligand>
        <name>ATP</name>
        <dbReference type="ChEBI" id="CHEBI:30616"/>
    </ligand>
</feature>
<feature type="modified residue" description="Phosphothreonine" evidence="1">
    <location>
        <position position="14"/>
    </location>
</feature>
<feature type="modified residue" description="Phosphotyrosine" evidence="1">
    <location>
        <position position="15"/>
    </location>
</feature>
<feature type="modified residue" description="Phosphothreonine; by CAK" evidence="1">
    <location>
        <position position="161"/>
    </location>
</feature>
<keyword id="KW-0067">ATP-binding</keyword>
<keyword id="KW-0131">Cell cycle</keyword>
<keyword id="KW-0132">Cell division</keyword>
<keyword id="KW-0418">Kinase</keyword>
<keyword id="KW-0498">Mitosis</keyword>
<keyword id="KW-0547">Nucleotide-binding</keyword>
<keyword id="KW-0597">Phosphoprotein</keyword>
<keyword id="KW-0723">Serine/threonine-protein kinase</keyword>
<keyword id="KW-0808">Transferase</keyword>
<reference key="1">
    <citation type="online journal article" date="1995" name="Plant Gene Register">
        <title>A cDNA from Vigna unguiculata encoding the protein kinase p34cdc2.</title>
        <authorList>
            <person name="Krause A."/>
            <person name="el Kouaissi R."/>
            <person name="Broughton W.J."/>
        </authorList>
        <locator>PGR95-076</locator>
    </citation>
    <scope>NUCLEOTIDE SEQUENCE [MRNA]</scope>
    <source>
        <strain>cv. Red Caloona</strain>
        <tissue>Root hair</tissue>
    </source>
</reference>
<protein>
    <recommendedName>
        <fullName>Cell division control protein 2 homolog</fullName>
        <ecNumber>2.7.11.22</ecNumber>
        <ecNumber>2.7.11.23</ecNumber>
    </recommendedName>
    <alternativeName>
        <fullName>p34cdc2</fullName>
    </alternativeName>
</protein>
<accession>P52389</accession>
<organism>
    <name type="scientific">Vigna unguiculata</name>
    <name type="common">Cowpea</name>
    <dbReference type="NCBI Taxonomy" id="3917"/>
    <lineage>
        <taxon>Eukaryota</taxon>
        <taxon>Viridiplantae</taxon>
        <taxon>Streptophyta</taxon>
        <taxon>Embryophyta</taxon>
        <taxon>Tracheophyta</taxon>
        <taxon>Spermatophyta</taxon>
        <taxon>Magnoliopsida</taxon>
        <taxon>eudicotyledons</taxon>
        <taxon>Gunneridae</taxon>
        <taxon>Pentapetalae</taxon>
        <taxon>rosids</taxon>
        <taxon>fabids</taxon>
        <taxon>Fabales</taxon>
        <taxon>Fabaceae</taxon>
        <taxon>Papilionoideae</taxon>
        <taxon>50 kb inversion clade</taxon>
        <taxon>NPAAA clade</taxon>
        <taxon>indigoferoid/millettioid clade</taxon>
        <taxon>Phaseoleae</taxon>
        <taxon>Vigna</taxon>
    </lineage>
</organism>
<gene>
    <name type="primary">CDC2</name>
</gene>